<reference key="1">
    <citation type="journal article" date="2006" name="Nat. Biotechnol.">
        <title>Genome sequence of the bioplastic-producing 'Knallgas' bacterium Ralstonia eutropha H16.</title>
        <authorList>
            <person name="Pohlmann A."/>
            <person name="Fricke W.F."/>
            <person name="Reinecke F."/>
            <person name="Kusian B."/>
            <person name="Liesegang H."/>
            <person name="Cramm R."/>
            <person name="Eitinger T."/>
            <person name="Ewering C."/>
            <person name="Poetter M."/>
            <person name="Schwartz E."/>
            <person name="Strittmatter A."/>
            <person name="Voss I."/>
            <person name="Gottschalk G."/>
            <person name="Steinbuechel A."/>
            <person name="Friedrich B."/>
            <person name="Bowien B."/>
        </authorList>
    </citation>
    <scope>NUCLEOTIDE SEQUENCE [LARGE SCALE GENOMIC DNA]</scope>
    <source>
        <strain>ATCC 17699 / DSM 428 / KCTC 22496 / NCIMB 10442 / H16 / Stanier 337</strain>
    </source>
</reference>
<gene>
    <name evidence="1" type="primary">aroA</name>
    <name type="ordered locus">H16_A0795</name>
</gene>
<accession>Q0KDH9</accession>
<keyword id="KW-0028">Amino-acid biosynthesis</keyword>
<keyword id="KW-0057">Aromatic amino acid biosynthesis</keyword>
<keyword id="KW-0963">Cytoplasm</keyword>
<keyword id="KW-1185">Reference proteome</keyword>
<keyword id="KW-0808">Transferase</keyword>
<protein>
    <recommendedName>
        <fullName evidence="1">3-phosphoshikimate 1-carboxyvinyltransferase</fullName>
        <ecNumber evidence="1">2.5.1.19</ecNumber>
    </recommendedName>
    <alternativeName>
        <fullName evidence="1">5-enolpyruvylshikimate-3-phosphate synthase</fullName>
        <shortName evidence="1">EPSP synthase</shortName>
        <shortName evidence="1">EPSPS</shortName>
    </alternativeName>
</protein>
<comment type="function">
    <text evidence="1">Catalyzes the transfer of the enolpyruvyl moiety of phosphoenolpyruvate (PEP) to the 5-hydroxyl of shikimate-3-phosphate (S3P) to produce enolpyruvyl shikimate-3-phosphate and inorganic phosphate.</text>
</comment>
<comment type="catalytic activity">
    <reaction evidence="1">
        <text>3-phosphoshikimate + phosphoenolpyruvate = 5-O-(1-carboxyvinyl)-3-phosphoshikimate + phosphate</text>
        <dbReference type="Rhea" id="RHEA:21256"/>
        <dbReference type="ChEBI" id="CHEBI:43474"/>
        <dbReference type="ChEBI" id="CHEBI:57701"/>
        <dbReference type="ChEBI" id="CHEBI:58702"/>
        <dbReference type="ChEBI" id="CHEBI:145989"/>
        <dbReference type="EC" id="2.5.1.19"/>
    </reaction>
    <physiologicalReaction direction="left-to-right" evidence="1">
        <dbReference type="Rhea" id="RHEA:21257"/>
    </physiologicalReaction>
</comment>
<comment type="pathway">
    <text evidence="1">Metabolic intermediate biosynthesis; chorismate biosynthesis; chorismate from D-erythrose 4-phosphate and phosphoenolpyruvate: step 6/7.</text>
</comment>
<comment type="subunit">
    <text evidence="1">Monomer.</text>
</comment>
<comment type="subcellular location">
    <subcellularLocation>
        <location evidence="1">Cytoplasm</location>
    </subcellularLocation>
</comment>
<comment type="similarity">
    <text evidence="1">Belongs to the EPSP synthase family.</text>
</comment>
<feature type="chain" id="PRO_1000012463" description="3-phosphoshikimate 1-carboxyvinyltransferase">
    <location>
        <begin position="1"/>
        <end position="434"/>
    </location>
</feature>
<feature type="active site" description="Proton acceptor" evidence="1">
    <location>
        <position position="320"/>
    </location>
</feature>
<feature type="binding site" evidence="1">
    <location>
        <position position="22"/>
    </location>
    <ligand>
        <name>3-phosphoshikimate</name>
        <dbReference type="ChEBI" id="CHEBI:145989"/>
    </ligand>
</feature>
<feature type="binding site" evidence="1">
    <location>
        <position position="22"/>
    </location>
    <ligand>
        <name>phosphoenolpyruvate</name>
        <dbReference type="ChEBI" id="CHEBI:58702"/>
    </ligand>
</feature>
<feature type="binding site" evidence="1">
    <location>
        <position position="23"/>
    </location>
    <ligand>
        <name>3-phosphoshikimate</name>
        <dbReference type="ChEBI" id="CHEBI:145989"/>
    </ligand>
</feature>
<feature type="binding site" evidence="1">
    <location>
        <position position="27"/>
    </location>
    <ligand>
        <name>3-phosphoshikimate</name>
        <dbReference type="ChEBI" id="CHEBI:145989"/>
    </ligand>
</feature>
<feature type="binding site" evidence="1">
    <location>
        <position position="93"/>
    </location>
    <ligand>
        <name>phosphoenolpyruvate</name>
        <dbReference type="ChEBI" id="CHEBI:58702"/>
    </ligand>
</feature>
<feature type="binding site" evidence="1">
    <location>
        <position position="121"/>
    </location>
    <ligand>
        <name>phosphoenolpyruvate</name>
        <dbReference type="ChEBI" id="CHEBI:58702"/>
    </ligand>
</feature>
<feature type="binding site" evidence="1">
    <location>
        <position position="168"/>
    </location>
    <ligand>
        <name>3-phosphoshikimate</name>
        <dbReference type="ChEBI" id="CHEBI:145989"/>
    </ligand>
</feature>
<feature type="binding site" evidence="1">
    <location>
        <position position="169"/>
    </location>
    <ligand>
        <name>3-phosphoshikimate</name>
        <dbReference type="ChEBI" id="CHEBI:145989"/>
    </ligand>
</feature>
<feature type="binding site" evidence="1">
    <location>
        <position position="170"/>
    </location>
    <ligand>
        <name>3-phosphoshikimate</name>
        <dbReference type="ChEBI" id="CHEBI:145989"/>
    </ligand>
</feature>
<feature type="binding site" evidence="1">
    <location>
        <position position="170"/>
    </location>
    <ligand>
        <name>phosphoenolpyruvate</name>
        <dbReference type="ChEBI" id="CHEBI:58702"/>
    </ligand>
</feature>
<feature type="binding site" evidence="1">
    <location>
        <position position="199"/>
    </location>
    <ligand>
        <name>3-phosphoshikimate</name>
        <dbReference type="ChEBI" id="CHEBI:145989"/>
    </ligand>
</feature>
<feature type="binding site" evidence="1">
    <location>
        <position position="320"/>
    </location>
    <ligand>
        <name>3-phosphoshikimate</name>
        <dbReference type="ChEBI" id="CHEBI:145989"/>
    </ligand>
</feature>
<feature type="binding site" evidence="1">
    <location>
        <position position="347"/>
    </location>
    <ligand>
        <name>3-phosphoshikimate</name>
        <dbReference type="ChEBI" id="CHEBI:145989"/>
    </ligand>
</feature>
<feature type="binding site" evidence="1">
    <location>
        <position position="351"/>
    </location>
    <ligand>
        <name>phosphoenolpyruvate</name>
        <dbReference type="ChEBI" id="CHEBI:58702"/>
    </ligand>
</feature>
<feature type="binding site" evidence="1">
    <location>
        <position position="395"/>
    </location>
    <ligand>
        <name>phosphoenolpyruvate</name>
        <dbReference type="ChEBI" id="CHEBI:58702"/>
    </ligand>
</feature>
<feature type="binding site" evidence="1">
    <location>
        <position position="420"/>
    </location>
    <ligand>
        <name>phosphoenolpyruvate</name>
        <dbReference type="ChEBI" id="CHEBI:58702"/>
    </ligand>
</feature>
<organism>
    <name type="scientific">Cupriavidus necator (strain ATCC 17699 / DSM 428 / KCTC 22496 / NCIMB 10442 / H16 / Stanier 337)</name>
    <name type="common">Ralstonia eutropha</name>
    <dbReference type="NCBI Taxonomy" id="381666"/>
    <lineage>
        <taxon>Bacteria</taxon>
        <taxon>Pseudomonadati</taxon>
        <taxon>Pseudomonadota</taxon>
        <taxon>Betaproteobacteria</taxon>
        <taxon>Burkholderiales</taxon>
        <taxon>Burkholderiaceae</taxon>
        <taxon>Cupriavidus</taxon>
    </lineage>
</organism>
<dbReference type="EC" id="2.5.1.19" evidence="1"/>
<dbReference type="EMBL" id="AM260479">
    <property type="protein sequence ID" value="CAJ91942.1"/>
    <property type="molecule type" value="Genomic_DNA"/>
</dbReference>
<dbReference type="RefSeq" id="WP_010812957.1">
    <property type="nucleotide sequence ID" value="NZ_CP039287.1"/>
</dbReference>
<dbReference type="SMR" id="Q0KDH9"/>
<dbReference type="STRING" id="381666.H16_A0795"/>
<dbReference type="KEGG" id="reh:H16_A0795"/>
<dbReference type="eggNOG" id="COG0128">
    <property type="taxonomic scope" value="Bacteria"/>
</dbReference>
<dbReference type="HOGENOM" id="CLU_024321_0_0_4"/>
<dbReference type="OrthoDB" id="9809920at2"/>
<dbReference type="UniPathway" id="UPA00053">
    <property type="reaction ID" value="UER00089"/>
</dbReference>
<dbReference type="Proteomes" id="UP000008210">
    <property type="component" value="Chromosome 1"/>
</dbReference>
<dbReference type="GO" id="GO:0005737">
    <property type="term" value="C:cytoplasm"/>
    <property type="evidence" value="ECO:0007669"/>
    <property type="project" value="UniProtKB-SubCell"/>
</dbReference>
<dbReference type="GO" id="GO:0003866">
    <property type="term" value="F:3-phosphoshikimate 1-carboxyvinyltransferase activity"/>
    <property type="evidence" value="ECO:0007669"/>
    <property type="project" value="UniProtKB-UniRule"/>
</dbReference>
<dbReference type="GO" id="GO:0008652">
    <property type="term" value="P:amino acid biosynthetic process"/>
    <property type="evidence" value="ECO:0007669"/>
    <property type="project" value="UniProtKB-KW"/>
</dbReference>
<dbReference type="GO" id="GO:0009073">
    <property type="term" value="P:aromatic amino acid family biosynthetic process"/>
    <property type="evidence" value="ECO:0007669"/>
    <property type="project" value="UniProtKB-KW"/>
</dbReference>
<dbReference type="GO" id="GO:0009423">
    <property type="term" value="P:chorismate biosynthetic process"/>
    <property type="evidence" value="ECO:0007669"/>
    <property type="project" value="UniProtKB-UniRule"/>
</dbReference>
<dbReference type="CDD" id="cd01556">
    <property type="entry name" value="EPSP_synthase"/>
    <property type="match status" value="1"/>
</dbReference>
<dbReference type="FunFam" id="3.65.10.10:FF:000003">
    <property type="entry name" value="3-phosphoshikimate 1-carboxyvinyltransferase"/>
    <property type="match status" value="1"/>
</dbReference>
<dbReference type="FunFam" id="3.65.10.10:FF:000004">
    <property type="entry name" value="3-phosphoshikimate 1-carboxyvinyltransferase"/>
    <property type="match status" value="1"/>
</dbReference>
<dbReference type="Gene3D" id="3.65.10.10">
    <property type="entry name" value="Enolpyruvate transferase domain"/>
    <property type="match status" value="2"/>
</dbReference>
<dbReference type="HAMAP" id="MF_00210">
    <property type="entry name" value="EPSP_synth"/>
    <property type="match status" value="1"/>
</dbReference>
<dbReference type="InterPro" id="IPR001986">
    <property type="entry name" value="Enolpyruvate_Tfrase_dom"/>
</dbReference>
<dbReference type="InterPro" id="IPR036968">
    <property type="entry name" value="Enolpyruvate_Tfrase_sf"/>
</dbReference>
<dbReference type="InterPro" id="IPR006264">
    <property type="entry name" value="EPSP_synthase"/>
</dbReference>
<dbReference type="InterPro" id="IPR023193">
    <property type="entry name" value="EPSP_synthase_CS"/>
</dbReference>
<dbReference type="InterPro" id="IPR013792">
    <property type="entry name" value="RNA3'P_cycl/enolpyr_Trfase_a/b"/>
</dbReference>
<dbReference type="NCBIfam" id="TIGR01356">
    <property type="entry name" value="aroA"/>
    <property type="match status" value="1"/>
</dbReference>
<dbReference type="PANTHER" id="PTHR21090">
    <property type="entry name" value="AROM/DEHYDROQUINATE SYNTHASE"/>
    <property type="match status" value="1"/>
</dbReference>
<dbReference type="PANTHER" id="PTHR21090:SF5">
    <property type="entry name" value="PENTAFUNCTIONAL AROM POLYPEPTIDE"/>
    <property type="match status" value="1"/>
</dbReference>
<dbReference type="Pfam" id="PF00275">
    <property type="entry name" value="EPSP_synthase"/>
    <property type="match status" value="1"/>
</dbReference>
<dbReference type="PIRSF" id="PIRSF000505">
    <property type="entry name" value="EPSPS"/>
    <property type="match status" value="1"/>
</dbReference>
<dbReference type="SUPFAM" id="SSF55205">
    <property type="entry name" value="EPT/RTPC-like"/>
    <property type="match status" value="1"/>
</dbReference>
<dbReference type="PROSITE" id="PS00104">
    <property type="entry name" value="EPSP_SYNTHASE_1"/>
    <property type="match status" value="1"/>
</dbReference>
<dbReference type="PROSITE" id="PS00885">
    <property type="entry name" value="EPSP_SYNTHASE_2"/>
    <property type="match status" value="1"/>
</dbReference>
<name>AROA_CUPNH</name>
<evidence type="ECO:0000255" key="1">
    <source>
        <dbReference type="HAMAP-Rule" id="MF_00210"/>
    </source>
</evidence>
<proteinExistence type="inferred from homology"/>
<sequence length="434" mass="46416">MEHLTLGPLTRANGTVRLPGSKSISNRVLLLAALATGETRVRDLLDSDDTRVMLQALRTLGVAWRQEGDDYIVTGAGGNFPNKSAELFMGNAGTAIRPLTAALALQGGNYKLSGVPRMHERPIGDLVDGLRQVGAVIDYLGNEGFPPLHIQPAGIRIDAPIRVRGDVSSQFLTALLMSLPMAQSDSGRIEIEVVGELISKPYIEITLNLLARFGIEIERQGWERFVLPAGAAYRSPGEIFVEGDASSASYFLAAGAIGGGPVRVEGVGMASIQGDVRFAEALNRMGANVMAGDNWIEVRGTERDDGRLHGIELDCNHIPDAAMTLAVAALFAEGTTTLTNIASWRVKETDRIAAMATELRKLGAVVEEGADYLRVTPPQPWQTPADGIGTYDDHRMAMCFSLAAFGPLPVRINDPGCVAKTFPDYFSVFAGVTG</sequence>